<sequence>MMAARMMAAGLAATALSAHAFRIPTPGEQDARIQTVPYHPEEVVLVRAWNGYVTRIVFDEQEKIIDVAAGFADGWQFSPEGNVLYIKAKSFPAQGSPAQAPEPGLWNTNLLVKTDRRLYDFDLVLASADAATPQALQRSRMAYRLQFRYPAAPQAASRASPVGPAVPAGALNRRYAMQVGNGSDGIAPIAAYDDGRHTWLTFRPGQPFPAVFAVAPDGTETLVNLHIDNQSLVIHRVAPVLMLRSGASVIRIVNQNGDASESPAFECHAEPAL</sequence>
<gene>
    <name type="primary">ptlF</name>
    <name type="ordered locus">BP3794</name>
</gene>
<dbReference type="EMBL" id="L10720">
    <property type="status" value="NOT_ANNOTATED_CDS"/>
    <property type="molecule type" value="Genomic_DNA"/>
</dbReference>
<dbReference type="EMBL" id="BX640422">
    <property type="protein sequence ID" value="CAE44049.1"/>
    <property type="molecule type" value="Genomic_DNA"/>
</dbReference>
<dbReference type="RefSeq" id="NP_882293.1">
    <property type="nucleotide sequence ID" value="NC_002929.2"/>
</dbReference>
<dbReference type="RefSeq" id="WP_010931654.1">
    <property type="nucleotide sequence ID" value="NZ_CP039022.1"/>
</dbReference>
<dbReference type="SMR" id="Q7VSX5"/>
<dbReference type="STRING" id="257313.BP3794"/>
<dbReference type="PaxDb" id="257313-BP3794"/>
<dbReference type="GeneID" id="69599981"/>
<dbReference type="KEGG" id="bpe:BP3794"/>
<dbReference type="PATRIC" id="fig|257313.5.peg.4098"/>
<dbReference type="eggNOG" id="COG3504">
    <property type="taxonomic scope" value="Bacteria"/>
</dbReference>
<dbReference type="HOGENOM" id="CLU_058585_3_0_4"/>
<dbReference type="Proteomes" id="UP000002676">
    <property type="component" value="Chromosome"/>
</dbReference>
<dbReference type="GO" id="GO:0009279">
    <property type="term" value="C:cell outer membrane"/>
    <property type="evidence" value="ECO:0007669"/>
    <property type="project" value="UniProtKB-SubCell"/>
</dbReference>
<dbReference type="CDD" id="cd06911">
    <property type="entry name" value="VirB9_CagX_TrbG"/>
    <property type="match status" value="1"/>
</dbReference>
<dbReference type="Gene3D" id="2.60.40.2500">
    <property type="match status" value="1"/>
</dbReference>
<dbReference type="InterPro" id="IPR010258">
    <property type="entry name" value="Conjugal_tfr_TrbG/VirB9/CagX"/>
</dbReference>
<dbReference type="InterPro" id="IPR014148">
    <property type="entry name" value="VirB9"/>
</dbReference>
<dbReference type="InterPro" id="IPR033645">
    <property type="entry name" value="VirB9/CagX/TrbG_C"/>
</dbReference>
<dbReference type="InterPro" id="IPR038161">
    <property type="entry name" value="VirB9/CagX/TrbG_C_sf"/>
</dbReference>
<dbReference type="NCBIfam" id="TIGR02781">
    <property type="entry name" value="VirB9"/>
    <property type="match status" value="1"/>
</dbReference>
<dbReference type="Pfam" id="PF03524">
    <property type="entry name" value="CagX"/>
    <property type="match status" value="1"/>
</dbReference>
<reference key="1">
    <citation type="journal article" date="1993" name="Proc. Natl. Acad. Sci. U.S.A.">
        <title>Molecular characterization of an operon required for pertussis toxin secretion.</title>
        <authorList>
            <person name="Weiss A.A."/>
            <person name="Johnson F.D."/>
            <person name="Burns D.L."/>
        </authorList>
    </citation>
    <scope>NUCLEOTIDE SEQUENCE [GENOMIC DNA]</scope>
    <scope>FUNCTION</scope>
    <source>
        <strain>Tohama I / BP338</strain>
    </source>
</reference>
<reference key="2">
    <citation type="journal article" date="2003" name="Nat. Genet.">
        <title>Comparative analysis of the genome sequences of Bordetella pertussis, Bordetella parapertussis and Bordetella bronchiseptica.</title>
        <authorList>
            <person name="Parkhill J."/>
            <person name="Sebaihia M."/>
            <person name="Preston A."/>
            <person name="Murphy L.D."/>
            <person name="Thomson N.R."/>
            <person name="Harris D.E."/>
            <person name="Holden M.T.G."/>
            <person name="Churcher C.M."/>
            <person name="Bentley S.D."/>
            <person name="Mungall K.L."/>
            <person name="Cerdeno-Tarraga A.-M."/>
            <person name="Temple L."/>
            <person name="James K.D."/>
            <person name="Harris B."/>
            <person name="Quail M.A."/>
            <person name="Achtman M."/>
            <person name="Atkin R."/>
            <person name="Baker S."/>
            <person name="Basham D."/>
            <person name="Bason N."/>
            <person name="Cherevach I."/>
            <person name="Chillingworth T."/>
            <person name="Collins M."/>
            <person name="Cronin A."/>
            <person name="Davis P."/>
            <person name="Doggett J."/>
            <person name="Feltwell T."/>
            <person name="Goble A."/>
            <person name="Hamlin N."/>
            <person name="Hauser H."/>
            <person name="Holroyd S."/>
            <person name="Jagels K."/>
            <person name="Leather S."/>
            <person name="Moule S."/>
            <person name="Norberczak H."/>
            <person name="O'Neil S."/>
            <person name="Ormond D."/>
            <person name="Price C."/>
            <person name="Rabbinowitsch E."/>
            <person name="Rutter S."/>
            <person name="Sanders M."/>
            <person name="Saunders D."/>
            <person name="Seeger K."/>
            <person name="Sharp S."/>
            <person name="Simmonds M."/>
            <person name="Skelton J."/>
            <person name="Squares R."/>
            <person name="Squares S."/>
            <person name="Stevens K."/>
            <person name="Unwin L."/>
            <person name="Whitehead S."/>
            <person name="Barrell B.G."/>
            <person name="Maskell D.J."/>
        </authorList>
    </citation>
    <scope>NUCLEOTIDE SEQUENCE [LARGE SCALE GENOMIC DNA]</scope>
    <source>
        <strain>Tohama I / ATCC BAA-589 / NCTC 13251</strain>
    </source>
</reference>
<reference key="3">
    <citation type="journal article" date="1994" name="J. Bacteriol.">
        <title>Detection and subcellular localization of three Ptl proteins involved in the secretion of pertussis toxin from Bordetella pertussis.</title>
        <authorList>
            <person name="Johnson F.D."/>
            <person name="Burns D.L."/>
        </authorList>
    </citation>
    <scope>SUBCELLULAR LOCATION</scope>
    <source>
        <strain>Tohama I / BP338</strain>
    </source>
</reference>
<reference key="4">
    <citation type="journal article" date="1995" name="J. Bacteriol.">
        <title>Synergistic binding of RNA polymerase and BvgA phosphate to the pertussis toxin promoter of Bordetella pertussis.</title>
        <authorList>
            <person name="Boucher P.E."/>
            <person name="Stibitz S."/>
        </authorList>
    </citation>
    <scope>REGULATION BY BVGS/BVGA</scope>
    <source>
        <strain>Tohama I / ATCC BAA-589 / NCTC 13251</strain>
    </source>
</reference>
<reference key="5">
    <citation type="journal article" date="1996" name="Infect. Immun.">
        <title>The pertussis toxin liberation genes of Bordetella pertussis are transcriptionally linked to the pertussis toxin operon.</title>
        <authorList>
            <person name="Ricci S."/>
            <person name="Rappuoli R."/>
            <person name="Scarlato V."/>
        </authorList>
    </citation>
    <scope>COTRANSCRIPTION WITH PTX</scope>
    <source>
        <strain>Wellcome 28</strain>
    </source>
</reference>
<reference key="6">
    <citation type="journal article" date="1996" name="J. Biol. Chem.">
        <title>Evidence for a ninth gene, ptlI, in the locus encoding the pertussis toxin secretion system of Bordetella pertussis and formation of a PtlI-PtlF complex.</title>
        <authorList>
            <person name="Farizo K.M."/>
            <person name="Cafarella T.G."/>
            <person name="Burns D.L."/>
        </authorList>
    </citation>
    <scope>INTERACTION WITH PTLI</scope>
    <source>
        <strain>Tohama I / BP338</strain>
    </source>
</reference>
<reference key="7">
    <citation type="journal article" date="1999" name="FEMS Microbiol. Lett.">
        <title>Mutants in the ptlA-H genes of Bordetella pertussis are deficient for pertussis toxin secretion.</title>
        <authorList>
            <person name="Craig-Mylius K.A."/>
            <person name="Weiss A.A."/>
        </authorList>
    </citation>
    <scope>FUNCTION</scope>
    <source>
        <strain>Tohama I / BP338</strain>
    </source>
</reference>
<reference key="8">
    <citation type="journal article" date="2004" name="Infect. Immun.">
        <title>Analysis of subassemblies of pertussis toxin subunits in vivo and their interaction with the ptl transport apparatus.</title>
        <authorList>
            <person name="Burns D.L."/>
            <person name="Fiddner S."/>
            <person name="Cheung A.M."/>
            <person name="Verma A."/>
        </authorList>
    </citation>
    <scope>FUNCTION</scope>
    <source>
        <strain>Tohama I / BP338</strain>
    </source>
</reference>
<feature type="signal peptide" evidence="1">
    <location>
        <begin position="1"/>
        <end position="20"/>
    </location>
</feature>
<feature type="chain" id="PRO_0000262577" description="Type IV secretion system protein PtlF">
    <location>
        <begin position="21"/>
        <end position="273"/>
    </location>
</feature>
<comment type="function">
    <text evidence="2 3 4">Component of the type IV secretion system ptl required for secretion of assembled pertussis toxin (PTX) through the outer membrane.</text>
</comment>
<comment type="subunit">
    <text>Forms a complex with PtlI.</text>
</comment>
<comment type="subcellular location">
    <subcellularLocation>
        <location evidence="5">Cell outer membrane</location>
    </subcellularLocation>
</comment>
<comment type="induction">
    <text>Cotranscribed with ptxABCDE. Activated by the two-component regulatory system BvgS/BvgA.</text>
</comment>
<comment type="similarity">
    <text evidence="5">Belongs to the TrbG/VirB9 family.</text>
</comment>
<keyword id="KW-0998">Cell outer membrane</keyword>
<keyword id="KW-0472">Membrane</keyword>
<keyword id="KW-1185">Reference proteome</keyword>
<keyword id="KW-0732">Signal</keyword>
<keyword id="KW-0813">Transport</keyword>
<organism>
    <name type="scientific">Bordetella pertussis (strain Tohama I / ATCC BAA-589 / NCTC 13251)</name>
    <dbReference type="NCBI Taxonomy" id="257313"/>
    <lineage>
        <taxon>Bacteria</taxon>
        <taxon>Pseudomonadati</taxon>
        <taxon>Pseudomonadota</taxon>
        <taxon>Betaproteobacteria</taxon>
        <taxon>Burkholderiales</taxon>
        <taxon>Alcaligenaceae</taxon>
        <taxon>Bordetella</taxon>
    </lineage>
</organism>
<name>PTLF_BORPE</name>
<protein>
    <recommendedName>
        <fullName>Type IV secretion system protein PtlF</fullName>
    </recommendedName>
    <alternativeName>
        <fullName>Pertussis toxin liberation protein F</fullName>
    </alternativeName>
</protein>
<evidence type="ECO:0000255" key="1"/>
<evidence type="ECO:0000269" key="2">
    <source>
    </source>
</evidence>
<evidence type="ECO:0000269" key="3">
    <source>
    </source>
</evidence>
<evidence type="ECO:0000269" key="4">
    <source>
    </source>
</evidence>
<evidence type="ECO:0000305" key="5"/>
<proteinExistence type="evidence at protein level"/>
<accession>Q7VSX5</accession>